<proteinExistence type="inferred from homology"/>
<protein>
    <recommendedName>
        <fullName evidence="1">Disulfide bond formation protein B</fullName>
    </recommendedName>
    <alternativeName>
        <fullName evidence="1">Disulfide oxidoreductase</fullName>
    </alternativeName>
</protein>
<gene>
    <name evidence="1" type="primary">dsbB</name>
    <name type="ordered locus">Pnap_1547</name>
</gene>
<organism>
    <name type="scientific">Polaromonas naphthalenivorans (strain CJ2)</name>
    <dbReference type="NCBI Taxonomy" id="365044"/>
    <lineage>
        <taxon>Bacteria</taxon>
        <taxon>Pseudomonadati</taxon>
        <taxon>Pseudomonadota</taxon>
        <taxon>Betaproteobacteria</taxon>
        <taxon>Burkholderiales</taxon>
        <taxon>Comamonadaceae</taxon>
        <taxon>Polaromonas</taxon>
    </lineage>
</organism>
<keyword id="KW-0997">Cell inner membrane</keyword>
<keyword id="KW-1003">Cell membrane</keyword>
<keyword id="KW-0143">Chaperone</keyword>
<keyword id="KW-1015">Disulfide bond</keyword>
<keyword id="KW-0249">Electron transport</keyword>
<keyword id="KW-0472">Membrane</keyword>
<keyword id="KW-0560">Oxidoreductase</keyword>
<keyword id="KW-0676">Redox-active center</keyword>
<keyword id="KW-1185">Reference proteome</keyword>
<keyword id="KW-0812">Transmembrane</keyword>
<keyword id="KW-1133">Transmembrane helix</keyword>
<keyword id="KW-0813">Transport</keyword>
<comment type="function">
    <text evidence="1">Required for disulfide bond formation in some periplasmic proteins. Acts by oxidizing the DsbA protein.</text>
</comment>
<comment type="subcellular location">
    <subcellularLocation>
        <location evidence="1">Cell inner membrane</location>
        <topology evidence="1">Multi-pass membrane protein</topology>
    </subcellularLocation>
</comment>
<comment type="similarity">
    <text evidence="1">Belongs to the DsbB family.</text>
</comment>
<reference key="1">
    <citation type="journal article" date="2009" name="Environ. Microbiol.">
        <title>The genome of Polaromonas naphthalenivorans strain CJ2, isolated from coal tar-contaminated sediment, reveals physiological and metabolic versatility and evolution through extensive horizontal gene transfer.</title>
        <authorList>
            <person name="Yagi J.M."/>
            <person name="Sims D."/>
            <person name="Brettin T."/>
            <person name="Bruce D."/>
            <person name="Madsen E.L."/>
        </authorList>
    </citation>
    <scope>NUCLEOTIDE SEQUENCE [LARGE SCALE GENOMIC DNA]</scope>
    <source>
        <strain>CJ2</strain>
    </source>
</reference>
<dbReference type="EMBL" id="CP000529">
    <property type="protein sequence ID" value="ABM36861.1"/>
    <property type="molecule type" value="Genomic_DNA"/>
</dbReference>
<dbReference type="RefSeq" id="WP_011800948.1">
    <property type="nucleotide sequence ID" value="NC_008781.1"/>
</dbReference>
<dbReference type="SMR" id="A1VMI3"/>
<dbReference type="STRING" id="365044.Pnap_1547"/>
<dbReference type="KEGG" id="pna:Pnap_1547"/>
<dbReference type="eggNOG" id="COG1495">
    <property type="taxonomic scope" value="Bacteria"/>
</dbReference>
<dbReference type="HOGENOM" id="CLU_098660_1_0_4"/>
<dbReference type="OrthoDB" id="3711263at2"/>
<dbReference type="Proteomes" id="UP000000644">
    <property type="component" value="Chromosome"/>
</dbReference>
<dbReference type="GO" id="GO:0005886">
    <property type="term" value="C:plasma membrane"/>
    <property type="evidence" value="ECO:0007669"/>
    <property type="project" value="UniProtKB-SubCell"/>
</dbReference>
<dbReference type="GO" id="GO:0009055">
    <property type="term" value="F:electron transfer activity"/>
    <property type="evidence" value="ECO:0007669"/>
    <property type="project" value="UniProtKB-UniRule"/>
</dbReference>
<dbReference type="GO" id="GO:0015035">
    <property type="term" value="F:protein-disulfide reductase activity"/>
    <property type="evidence" value="ECO:0007669"/>
    <property type="project" value="UniProtKB-UniRule"/>
</dbReference>
<dbReference type="GO" id="GO:0006457">
    <property type="term" value="P:protein folding"/>
    <property type="evidence" value="ECO:0007669"/>
    <property type="project" value="InterPro"/>
</dbReference>
<dbReference type="Gene3D" id="1.20.1550.10">
    <property type="entry name" value="DsbB-like"/>
    <property type="match status" value="1"/>
</dbReference>
<dbReference type="HAMAP" id="MF_00286">
    <property type="entry name" value="DsbB"/>
    <property type="match status" value="1"/>
</dbReference>
<dbReference type="InterPro" id="IPR003752">
    <property type="entry name" value="DiS_bond_form_DsbB/BdbC"/>
</dbReference>
<dbReference type="InterPro" id="IPR022920">
    <property type="entry name" value="Disulphide_bond_form_DsbB"/>
</dbReference>
<dbReference type="InterPro" id="IPR050183">
    <property type="entry name" value="DsbB"/>
</dbReference>
<dbReference type="InterPro" id="IPR023380">
    <property type="entry name" value="DsbB-like_sf"/>
</dbReference>
<dbReference type="PANTHER" id="PTHR36570">
    <property type="entry name" value="DISULFIDE BOND FORMATION PROTEIN B"/>
    <property type="match status" value="1"/>
</dbReference>
<dbReference type="PANTHER" id="PTHR36570:SF3">
    <property type="entry name" value="DISULFIDE BOND FORMATION PROTEIN B"/>
    <property type="match status" value="1"/>
</dbReference>
<dbReference type="Pfam" id="PF02600">
    <property type="entry name" value="DsbB"/>
    <property type="match status" value="1"/>
</dbReference>
<dbReference type="SUPFAM" id="SSF158442">
    <property type="entry name" value="DsbB-like"/>
    <property type="match status" value="1"/>
</dbReference>
<evidence type="ECO:0000255" key="1">
    <source>
        <dbReference type="HAMAP-Rule" id="MF_00286"/>
    </source>
</evidence>
<accession>A1VMI3</accession>
<name>DSBB_POLNA</name>
<sequence>MFLNLLDAPRRLLALVALGCVALLAFGLYLQHVVGLEPCPMCIVQRYALVLVAIVAGLTAITSNKKGLITGSGVLLLLAGFGAFVAARQSFLQWYPPEVASCGRDFYGMIETFPLQRAIPMIFKGSGDCAKVDWTFLGGSIANWSFVCFAVIGLTALTLIARLARQR</sequence>
<feature type="chain" id="PRO_0000298379" description="Disulfide bond formation protein B">
    <location>
        <begin position="1"/>
        <end position="167"/>
    </location>
</feature>
<feature type="topological domain" description="Cytoplasmic" evidence="1">
    <location>
        <begin position="1"/>
        <end position="12"/>
    </location>
</feature>
<feature type="transmembrane region" description="Helical" evidence="1">
    <location>
        <begin position="13"/>
        <end position="29"/>
    </location>
</feature>
<feature type="topological domain" description="Periplasmic" evidence="1">
    <location>
        <begin position="30"/>
        <end position="47"/>
    </location>
</feature>
<feature type="transmembrane region" description="Helical" evidence="1">
    <location>
        <begin position="48"/>
        <end position="63"/>
    </location>
</feature>
<feature type="topological domain" description="Cytoplasmic" evidence="1">
    <location>
        <begin position="64"/>
        <end position="69"/>
    </location>
</feature>
<feature type="transmembrane region" description="Helical" evidence="1">
    <location>
        <begin position="70"/>
        <end position="87"/>
    </location>
</feature>
<feature type="topological domain" description="Periplasmic" evidence="1">
    <location>
        <begin position="88"/>
        <end position="143"/>
    </location>
</feature>
<feature type="transmembrane region" description="Helical" evidence="1">
    <location>
        <begin position="144"/>
        <end position="162"/>
    </location>
</feature>
<feature type="topological domain" description="Cytoplasmic" evidence="1">
    <location>
        <begin position="163"/>
        <end position="167"/>
    </location>
</feature>
<feature type="disulfide bond" description="Redox-active" evidence="1">
    <location>
        <begin position="39"/>
        <end position="42"/>
    </location>
</feature>
<feature type="disulfide bond" description="Redox-active" evidence="1">
    <location>
        <begin position="102"/>
        <end position="129"/>
    </location>
</feature>